<sequence>MIRQCRAGLRLCRALYQTSYRWHGKSACERALRYAPGESIHGFTVNEVTPVPELFLTAVKLSHDNTGAKYLHVAREDSNNLFSVQFRTTPLDSTGVPHILEHTVLCGSQKYPCRDPFFKMLNRSLSTFMNAFTASDYTMYPFSTQNAKDFQNLLSVYLDAVFFPCLRELDFWQEGWRLEHENPEDPNSPLIFKGIVFNEMKGAFTDNEKVFSQHLQNKLLPDHTYSVVSGGEPLNIPDLTWEQLKQFHATHYHPSNARFFTYGNLPLEIHLKQIHEDALSKFERIDPKTSVPPQERWQSPREYSISCGTDSFASDPEKQTTVSVNFLLSEITDTFEAFTLSLLSSLMVDGPNSPFYKALIEANLGTDFSPDTGFNNYTRETYFSIGLQGINKEDSEKVKAIINKTINEVAEHGIEAERIEALLHKLEIQMKHQSTSFGLTLASYVASCWNHEGDPVDLLKIGDKISRFRECLKENPKFLQDKVKQYFQVSQHRMTLSMSPDEQHYDKEAQLEAEKLTQKVKALSEEERKQIYEKGLELIRLQSKPQDASCLPALKVSDIEPKIPLTDLDITYAGDVPVQYCAQPTNGMVYFRAVSSLNTLPEELKPYVPLFCSVITKLGCGVYNYREQAQQMELTTGGMSVCPHIITDDSNLDTYEQGVVFSSLCLDRNLPDMMHLWSEIFNSPHFDDEERLRVLVRMSAQEMSNGIPDSGHVYASIRAGRTLTPAGELQELFSGMDQVKMIKRIAEMPEMGPILRKLSRIRKYVLLSDNMRCSVNATPQQMPVASKEIEHFLAGISRSKKERKSIRPHVVEKSSSPSSSGSEISRRATRKLVGDPTFKPCQMKTHFSLSFPVNYIGECVRTVPYTHPDYASLRILARIMTAKFLHGEIREKGGAYGGGAKLSFDGIFGFYSYRDPNSLSTLSTFQKAADWAKSGQFTQQDVDEAKLSVFSAVDSPIAPSDKGMNHFLHGISDEMKQKHREQLFAVTHSDLTNASNKYLTAGQCTRGTAILGPENRNIAKDPSWIIR</sequence>
<comment type="function">
    <text evidence="1">Metalloendopeptidase of the mitochondrial matrix that functions in peptide cleavage and degradation rather than in protein processing. Has an ATP-independent activity. Specifically cleaves peptides in the range of 5 to 65 residues. Shows a preference for cleavage after small polar residues and before basic residues, but without any positional preference. Degrades the transit peptides of mitochondrial proteins after their cleavage. Also degrades other unstructured peptides.</text>
</comment>
<comment type="cofactor">
    <cofactor evidence="1">
        <name>Zn(2+)</name>
        <dbReference type="ChEBI" id="CHEBI:29105"/>
    </cofactor>
    <text evidence="1">Binds 1 zinc ion per subunit.</text>
</comment>
<comment type="activity regulation">
    <text evidence="1">Mainly exists in a closed and catalytically competent conformation but a closed-to-open switch allows substrate entry into the catalytic chamber. Substrate binding induces closure and dimerization. A disulfide bond may lock the enzyme in a closed conformation preventing substrate entry into the catalytic chamber, participating in redox regulation of the enzyme. Inhibited by metal-chelating agents. Inhibited by nickel and zinc excess, and slightly activated by manganese.</text>
</comment>
<comment type="subunit">
    <text evidence="1">Monomer and homodimer; homodimerization is induced by binding of the substrate.</text>
</comment>
<comment type="subcellular location">
    <subcellularLocation>
        <location evidence="1">Mitochondrion matrix</location>
    </subcellularLocation>
</comment>
<comment type="PTM">
    <text evidence="1">A disulfide bond locks the enzyme in the closed conformation preventing substrate entry into the catalytic chamber.</text>
</comment>
<comment type="similarity">
    <text evidence="4">Belongs to the peptidase M16 family. PreP subfamily.</text>
</comment>
<proteinExistence type="evidence at transcript level"/>
<protein>
    <recommendedName>
        <fullName evidence="4">Presequence protease, mitochondrial</fullName>
        <ecNumber evidence="1">3.4.24.-</ecNumber>
    </recommendedName>
    <alternativeName>
        <fullName evidence="1">Pitrilysin metalloproteinase 1</fullName>
    </alternativeName>
</protein>
<reference key="1">
    <citation type="submission" date="2006-06" db="EMBL/GenBank/DDBJ databases">
        <authorList>
            <consortium name="Sanger Xenopus tropicalis EST/cDNA project"/>
        </authorList>
    </citation>
    <scope>NUCLEOTIDE SEQUENCE [LARGE SCALE MRNA]</scope>
    <source>
        <tissue>Neurula</tissue>
    </source>
</reference>
<feature type="transit peptide" description="Mitochondrion" evidence="2">
    <location>
        <begin position="1"/>
        <end position="22"/>
    </location>
</feature>
<feature type="chain" id="PRO_0000249936" description="Presequence protease, mitochondrial">
    <location>
        <begin position="23"/>
        <end position="1027"/>
    </location>
</feature>
<feature type="region of interest" description="Disordered" evidence="3">
    <location>
        <begin position="800"/>
        <end position="829"/>
    </location>
</feature>
<feature type="compositionally biased region" description="Low complexity" evidence="3">
    <location>
        <begin position="814"/>
        <end position="823"/>
    </location>
</feature>
<feature type="active site" description="Proton acceptor" evidence="1">
    <location>
        <position position="101"/>
    </location>
</feature>
<feature type="binding site" evidence="1">
    <location>
        <position position="98"/>
    </location>
    <ligand>
        <name>Zn(2+)</name>
        <dbReference type="ChEBI" id="CHEBI:29105"/>
        <note>catalytic</note>
    </ligand>
</feature>
<feature type="binding site" evidence="1">
    <location>
        <position position="102"/>
    </location>
    <ligand>
        <name>Zn(2+)</name>
        <dbReference type="ChEBI" id="CHEBI:29105"/>
        <note>catalytic</note>
    </ligand>
</feature>
<feature type="binding site" evidence="1">
    <location>
        <position position="199"/>
    </location>
    <ligand>
        <name>Zn(2+)</name>
        <dbReference type="ChEBI" id="CHEBI:29105"/>
        <note>catalytic</note>
    </ligand>
</feature>
<feature type="disulfide bond" evidence="1">
    <location>
        <begin position="113"/>
        <end position="550"/>
    </location>
</feature>
<evidence type="ECO:0000250" key="1">
    <source>
        <dbReference type="UniProtKB" id="Q5JRX3"/>
    </source>
</evidence>
<evidence type="ECO:0000255" key="2"/>
<evidence type="ECO:0000256" key="3">
    <source>
        <dbReference type="SAM" id="MobiDB-lite"/>
    </source>
</evidence>
<evidence type="ECO:0000305" key="4"/>
<evidence type="ECO:0000312" key="5">
    <source>
        <dbReference type="EMBL" id="CAJ82697.1"/>
    </source>
</evidence>
<accession>Q28BR5</accession>
<name>PREP_XENTR</name>
<dbReference type="EC" id="3.4.24.-" evidence="1"/>
<dbReference type="EMBL" id="CR942684">
    <property type="protein sequence ID" value="CAJ82697.1"/>
    <property type="molecule type" value="mRNA"/>
</dbReference>
<dbReference type="RefSeq" id="NP_001039262.1">
    <property type="nucleotide sequence ID" value="NM_001045797.1"/>
</dbReference>
<dbReference type="SMR" id="Q28BR5"/>
<dbReference type="FunCoup" id="Q28BR5">
    <property type="interactions" value="2470"/>
</dbReference>
<dbReference type="STRING" id="8364.ENSXETP00000008403"/>
<dbReference type="PaxDb" id="8364-ENSXETP00000021626"/>
<dbReference type="GeneID" id="734137"/>
<dbReference type="KEGG" id="xtr:734137"/>
<dbReference type="AGR" id="Xenbase:XB-GENE-952658"/>
<dbReference type="CTD" id="10531"/>
<dbReference type="Xenbase" id="XB-GENE-952658">
    <property type="gene designation" value="pitrm1"/>
</dbReference>
<dbReference type="eggNOG" id="KOG2019">
    <property type="taxonomic scope" value="Eukaryota"/>
</dbReference>
<dbReference type="InParanoid" id="Q28BR5"/>
<dbReference type="OMA" id="NYLYYIR"/>
<dbReference type="OrthoDB" id="10250783at2759"/>
<dbReference type="Reactome" id="R-XTR-1268020">
    <property type="pathway name" value="Mitochondrial protein import"/>
</dbReference>
<dbReference type="Proteomes" id="UP000008143">
    <property type="component" value="Chromosome 6"/>
</dbReference>
<dbReference type="GO" id="GO:0005759">
    <property type="term" value="C:mitochondrial matrix"/>
    <property type="evidence" value="ECO:0000250"/>
    <property type="project" value="UniProtKB"/>
</dbReference>
<dbReference type="GO" id="GO:0046872">
    <property type="term" value="F:metal ion binding"/>
    <property type="evidence" value="ECO:0007669"/>
    <property type="project" value="UniProtKB-KW"/>
</dbReference>
<dbReference type="GO" id="GO:0004222">
    <property type="term" value="F:metalloendopeptidase activity"/>
    <property type="evidence" value="ECO:0000250"/>
    <property type="project" value="UniProtKB"/>
</dbReference>
<dbReference type="GO" id="GO:0006508">
    <property type="term" value="P:proteolysis"/>
    <property type="evidence" value="ECO:0000250"/>
    <property type="project" value="UniProtKB"/>
</dbReference>
<dbReference type="FunFam" id="3.30.830.10:FF:000013">
    <property type="entry name" value="Mitochondrial presequence protease"/>
    <property type="match status" value="1"/>
</dbReference>
<dbReference type="FunFam" id="3.30.830.10:FF:000020">
    <property type="entry name" value="Mitochondrial presequence protease"/>
    <property type="match status" value="1"/>
</dbReference>
<dbReference type="FunFam" id="3.30.830.10:FF:000009">
    <property type="entry name" value="Presequence protease, mitochondrial"/>
    <property type="match status" value="1"/>
</dbReference>
<dbReference type="FunFam" id="3.30.830.10:FF:000011">
    <property type="entry name" value="Presequence protease, mitochondrial"/>
    <property type="match status" value="1"/>
</dbReference>
<dbReference type="Gene3D" id="3.30.830.10">
    <property type="entry name" value="Metalloenzyme, LuxS/M16 peptidase-like"/>
    <property type="match status" value="4"/>
</dbReference>
<dbReference type="InterPro" id="IPR011249">
    <property type="entry name" value="Metalloenz_LuxS/M16"/>
</dbReference>
<dbReference type="InterPro" id="IPR011765">
    <property type="entry name" value="Pept_M16_N"/>
</dbReference>
<dbReference type="InterPro" id="IPR007863">
    <property type="entry name" value="Peptidase_M16_C"/>
</dbReference>
<dbReference type="InterPro" id="IPR013578">
    <property type="entry name" value="Peptidase_M16C_assoc"/>
</dbReference>
<dbReference type="InterPro" id="IPR055130">
    <property type="entry name" value="PreP_C"/>
</dbReference>
<dbReference type="PANTHER" id="PTHR43016">
    <property type="entry name" value="PRESEQUENCE PROTEASE"/>
    <property type="match status" value="1"/>
</dbReference>
<dbReference type="PANTHER" id="PTHR43016:SF13">
    <property type="entry name" value="PRESEQUENCE PROTEASE, MITOCHONDRIAL"/>
    <property type="match status" value="1"/>
</dbReference>
<dbReference type="Pfam" id="PF08367">
    <property type="entry name" value="M16C_assoc"/>
    <property type="match status" value="1"/>
</dbReference>
<dbReference type="Pfam" id="PF00675">
    <property type="entry name" value="Peptidase_M16"/>
    <property type="match status" value="1"/>
</dbReference>
<dbReference type="Pfam" id="PF05193">
    <property type="entry name" value="Peptidase_M16_C"/>
    <property type="match status" value="1"/>
</dbReference>
<dbReference type="Pfam" id="PF22516">
    <property type="entry name" value="PreP_C"/>
    <property type="match status" value="1"/>
</dbReference>
<dbReference type="SMART" id="SM01264">
    <property type="entry name" value="M16C_associated"/>
    <property type="match status" value="1"/>
</dbReference>
<dbReference type="SUPFAM" id="SSF63411">
    <property type="entry name" value="LuxS/MPP-like metallohydrolase"/>
    <property type="match status" value="4"/>
</dbReference>
<organism>
    <name type="scientific">Xenopus tropicalis</name>
    <name type="common">Western clawed frog</name>
    <name type="synonym">Silurana tropicalis</name>
    <dbReference type="NCBI Taxonomy" id="8364"/>
    <lineage>
        <taxon>Eukaryota</taxon>
        <taxon>Metazoa</taxon>
        <taxon>Chordata</taxon>
        <taxon>Craniata</taxon>
        <taxon>Vertebrata</taxon>
        <taxon>Euteleostomi</taxon>
        <taxon>Amphibia</taxon>
        <taxon>Batrachia</taxon>
        <taxon>Anura</taxon>
        <taxon>Pipoidea</taxon>
        <taxon>Pipidae</taxon>
        <taxon>Xenopodinae</taxon>
        <taxon>Xenopus</taxon>
        <taxon>Silurana</taxon>
    </lineage>
</organism>
<keyword id="KW-1015">Disulfide bond</keyword>
<keyword id="KW-0378">Hydrolase</keyword>
<keyword id="KW-0479">Metal-binding</keyword>
<keyword id="KW-0482">Metalloprotease</keyword>
<keyword id="KW-0496">Mitochondrion</keyword>
<keyword id="KW-0645">Protease</keyword>
<keyword id="KW-1185">Reference proteome</keyword>
<keyword id="KW-0809">Transit peptide</keyword>
<keyword id="KW-0862">Zinc</keyword>
<gene>
    <name type="primary">pitrm1</name>
    <name evidence="5" type="ORF">TNeu116i05.1</name>
</gene>